<dbReference type="EMBL" id="AAFI02000070">
    <property type="protein sequence ID" value="EAL65080.1"/>
    <property type="molecule type" value="Genomic_DNA"/>
</dbReference>
<dbReference type="RefSeq" id="XP_638435.1">
    <property type="nucleotide sequence ID" value="XM_633343.1"/>
</dbReference>
<dbReference type="SMR" id="Q54PE0"/>
<dbReference type="FunCoup" id="Q54PE0">
    <property type="interactions" value="657"/>
</dbReference>
<dbReference type="STRING" id="44689.Q54PE0"/>
<dbReference type="GlyGen" id="Q54PE0">
    <property type="glycosylation" value="1 site"/>
</dbReference>
<dbReference type="PaxDb" id="44689-DDB0235358"/>
<dbReference type="EnsemblProtists" id="EAL65080">
    <property type="protein sequence ID" value="EAL65080"/>
    <property type="gene ID" value="DDB_G0284621"/>
</dbReference>
<dbReference type="GeneID" id="8624685"/>
<dbReference type="KEGG" id="ddi:DDB_G0284621"/>
<dbReference type="dictyBase" id="DDB_G0284621">
    <property type="gene designation" value="pwp2"/>
</dbReference>
<dbReference type="VEuPathDB" id="AmoebaDB:DDB_G0284621"/>
<dbReference type="eggNOG" id="KOG0291">
    <property type="taxonomic scope" value="Eukaryota"/>
</dbReference>
<dbReference type="HOGENOM" id="CLU_010458_0_0_1"/>
<dbReference type="InParanoid" id="Q54PE0"/>
<dbReference type="OMA" id="VYEWQSE"/>
<dbReference type="PhylomeDB" id="Q54PE0"/>
<dbReference type="Reactome" id="R-DDI-6791226">
    <property type="pathway name" value="Major pathway of rRNA processing in the nucleolus and cytosol"/>
</dbReference>
<dbReference type="PRO" id="PR:Q54PE0"/>
<dbReference type="Proteomes" id="UP000002195">
    <property type="component" value="Chromosome 4"/>
</dbReference>
<dbReference type="GO" id="GO:0005829">
    <property type="term" value="C:cytosol"/>
    <property type="evidence" value="ECO:0000250"/>
    <property type="project" value="dictyBase"/>
</dbReference>
<dbReference type="GO" id="GO:0005730">
    <property type="term" value="C:nucleolus"/>
    <property type="evidence" value="ECO:0000250"/>
    <property type="project" value="dictyBase"/>
</dbReference>
<dbReference type="GO" id="GO:0034388">
    <property type="term" value="C:Pwp2p-containing subcomplex of 90S preribosome"/>
    <property type="evidence" value="ECO:0000318"/>
    <property type="project" value="GO_Central"/>
</dbReference>
<dbReference type="GO" id="GO:0032040">
    <property type="term" value="C:small-subunit processome"/>
    <property type="evidence" value="ECO:0000250"/>
    <property type="project" value="UniProtKB"/>
</dbReference>
<dbReference type="GO" id="GO:0000462">
    <property type="term" value="P:maturation of SSU-rRNA from tricistronic rRNA transcript (SSU-rRNA, 5.8S rRNA, LSU-rRNA)"/>
    <property type="evidence" value="ECO:0000318"/>
    <property type="project" value="GO_Central"/>
</dbReference>
<dbReference type="GO" id="GO:0000028">
    <property type="term" value="P:ribosomal small subunit assembly"/>
    <property type="evidence" value="ECO:0000318"/>
    <property type="project" value="GO_Central"/>
</dbReference>
<dbReference type="GO" id="GO:0042274">
    <property type="term" value="P:ribosomal small subunit biogenesis"/>
    <property type="evidence" value="ECO:0000250"/>
    <property type="project" value="UniProtKB"/>
</dbReference>
<dbReference type="GO" id="GO:0006364">
    <property type="term" value="P:rRNA processing"/>
    <property type="evidence" value="ECO:0000250"/>
    <property type="project" value="dictyBase"/>
</dbReference>
<dbReference type="CDD" id="cd00200">
    <property type="entry name" value="WD40"/>
    <property type="match status" value="1"/>
</dbReference>
<dbReference type="FunFam" id="2.130.10.10:FF:003164">
    <property type="entry name" value="Periodic tryptophan protein 2 homolog"/>
    <property type="match status" value="1"/>
</dbReference>
<dbReference type="FunFam" id="2.130.10.10:FF:003171">
    <property type="entry name" value="Periodic tryptophan protein 2 homolog"/>
    <property type="match status" value="1"/>
</dbReference>
<dbReference type="Gene3D" id="2.130.10.10">
    <property type="entry name" value="YVTN repeat-like/Quinoprotein amine dehydrogenase"/>
    <property type="match status" value="3"/>
</dbReference>
<dbReference type="InterPro" id="IPR027145">
    <property type="entry name" value="PWP2"/>
</dbReference>
<dbReference type="InterPro" id="IPR011047">
    <property type="entry name" value="Quinoprotein_ADH-like_sf"/>
</dbReference>
<dbReference type="InterPro" id="IPR007148">
    <property type="entry name" value="SSU_processome_Utp12"/>
</dbReference>
<dbReference type="InterPro" id="IPR015943">
    <property type="entry name" value="WD40/YVTN_repeat-like_dom_sf"/>
</dbReference>
<dbReference type="InterPro" id="IPR019775">
    <property type="entry name" value="WD40_repeat_CS"/>
</dbReference>
<dbReference type="InterPro" id="IPR036322">
    <property type="entry name" value="WD40_repeat_dom_sf"/>
</dbReference>
<dbReference type="InterPro" id="IPR001680">
    <property type="entry name" value="WD40_rpt"/>
</dbReference>
<dbReference type="PANTHER" id="PTHR19858:SF0">
    <property type="entry name" value="PERIODIC TRYPTOPHAN PROTEIN 2 HOMOLOG"/>
    <property type="match status" value="1"/>
</dbReference>
<dbReference type="PANTHER" id="PTHR19858">
    <property type="entry name" value="WD40 REPEAT PROTEIN"/>
    <property type="match status" value="1"/>
</dbReference>
<dbReference type="Pfam" id="PF04003">
    <property type="entry name" value="Utp12"/>
    <property type="match status" value="1"/>
</dbReference>
<dbReference type="Pfam" id="PF00400">
    <property type="entry name" value="WD40"/>
    <property type="match status" value="4"/>
</dbReference>
<dbReference type="SMART" id="SM00320">
    <property type="entry name" value="WD40"/>
    <property type="match status" value="10"/>
</dbReference>
<dbReference type="SUPFAM" id="SSF82171">
    <property type="entry name" value="DPP6 N-terminal domain-like"/>
    <property type="match status" value="1"/>
</dbReference>
<dbReference type="SUPFAM" id="SSF50998">
    <property type="entry name" value="Quinoprotein alcohol dehydrogenase-like"/>
    <property type="match status" value="1"/>
</dbReference>
<dbReference type="SUPFAM" id="SSF50978">
    <property type="entry name" value="WD40 repeat-like"/>
    <property type="match status" value="1"/>
</dbReference>
<dbReference type="PROSITE" id="PS00678">
    <property type="entry name" value="WD_REPEATS_1"/>
    <property type="match status" value="2"/>
</dbReference>
<dbReference type="PROSITE" id="PS50082">
    <property type="entry name" value="WD_REPEATS_2"/>
    <property type="match status" value="3"/>
</dbReference>
<dbReference type="PROSITE" id="PS50294">
    <property type="entry name" value="WD_REPEATS_REGION"/>
    <property type="match status" value="1"/>
</dbReference>
<gene>
    <name type="primary">pwp2</name>
    <name type="synonym">utp1</name>
    <name type="ORF">DDB_G0284621</name>
</gene>
<comment type="function">
    <text evidence="1">Part of the small subunit (SSU) processome, first precursor of the small eukaryotic ribosomal subunit. During the assembly of the SSU processome in the nucleolus, many ribosome biogenesis factors, an RNA chaperone and ribosomal proteins associate with the nascent pre-rRNA and work in concert to generate RNA folding, modifications, rearrangements and cleavage as well as targeted degradation of pre-ribosomal RNA by the RNA exosome.</text>
</comment>
<comment type="subunit">
    <text evidence="1">Part of the small subunit (SSU) processome, composed of more than 70 proteins and the RNA chaperone small nucleolar RNA (snoRNA) U3.</text>
</comment>
<comment type="subcellular location">
    <subcellularLocation>
        <location evidence="1">Nucleus</location>
        <location evidence="1">Nucleolus</location>
    </subcellularLocation>
</comment>
<comment type="similarity">
    <text evidence="3">Belongs to the WD repeat PWP2 family.</text>
</comment>
<evidence type="ECO:0000250" key="1">
    <source>
        <dbReference type="UniProtKB" id="Q15269"/>
    </source>
</evidence>
<evidence type="ECO:0000256" key="2">
    <source>
        <dbReference type="SAM" id="MobiDB-lite"/>
    </source>
</evidence>
<evidence type="ECO:0000305" key="3"/>
<reference key="1">
    <citation type="journal article" date="2005" name="Nature">
        <title>The genome of the social amoeba Dictyostelium discoideum.</title>
        <authorList>
            <person name="Eichinger L."/>
            <person name="Pachebat J.A."/>
            <person name="Gloeckner G."/>
            <person name="Rajandream M.A."/>
            <person name="Sucgang R."/>
            <person name="Berriman M."/>
            <person name="Song J."/>
            <person name="Olsen R."/>
            <person name="Szafranski K."/>
            <person name="Xu Q."/>
            <person name="Tunggal B."/>
            <person name="Kummerfeld S."/>
            <person name="Madera M."/>
            <person name="Konfortov B.A."/>
            <person name="Rivero F."/>
            <person name="Bankier A.T."/>
            <person name="Lehmann R."/>
            <person name="Hamlin N."/>
            <person name="Davies R."/>
            <person name="Gaudet P."/>
            <person name="Fey P."/>
            <person name="Pilcher K."/>
            <person name="Chen G."/>
            <person name="Saunders D."/>
            <person name="Sodergren E.J."/>
            <person name="Davis P."/>
            <person name="Kerhornou A."/>
            <person name="Nie X."/>
            <person name="Hall N."/>
            <person name="Anjard C."/>
            <person name="Hemphill L."/>
            <person name="Bason N."/>
            <person name="Farbrother P."/>
            <person name="Desany B."/>
            <person name="Just E."/>
            <person name="Morio T."/>
            <person name="Rost R."/>
            <person name="Churcher C.M."/>
            <person name="Cooper J."/>
            <person name="Haydock S."/>
            <person name="van Driessche N."/>
            <person name="Cronin A."/>
            <person name="Goodhead I."/>
            <person name="Muzny D.M."/>
            <person name="Mourier T."/>
            <person name="Pain A."/>
            <person name="Lu M."/>
            <person name="Harper D."/>
            <person name="Lindsay R."/>
            <person name="Hauser H."/>
            <person name="James K.D."/>
            <person name="Quiles M."/>
            <person name="Madan Babu M."/>
            <person name="Saito T."/>
            <person name="Buchrieser C."/>
            <person name="Wardroper A."/>
            <person name="Felder M."/>
            <person name="Thangavelu M."/>
            <person name="Johnson D."/>
            <person name="Knights A."/>
            <person name="Loulseged H."/>
            <person name="Mungall K.L."/>
            <person name="Oliver K."/>
            <person name="Price C."/>
            <person name="Quail M.A."/>
            <person name="Urushihara H."/>
            <person name="Hernandez J."/>
            <person name="Rabbinowitsch E."/>
            <person name="Steffen D."/>
            <person name="Sanders M."/>
            <person name="Ma J."/>
            <person name="Kohara Y."/>
            <person name="Sharp S."/>
            <person name="Simmonds M.N."/>
            <person name="Spiegler S."/>
            <person name="Tivey A."/>
            <person name="Sugano S."/>
            <person name="White B."/>
            <person name="Walker D."/>
            <person name="Woodward J.R."/>
            <person name="Winckler T."/>
            <person name="Tanaka Y."/>
            <person name="Shaulsky G."/>
            <person name="Schleicher M."/>
            <person name="Weinstock G.M."/>
            <person name="Rosenthal A."/>
            <person name="Cox E.C."/>
            <person name="Chisholm R.L."/>
            <person name="Gibbs R.A."/>
            <person name="Loomis W.F."/>
            <person name="Platzer M."/>
            <person name="Kay R.R."/>
            <person name="Williams J.G."/>
            <person name="Dear P.H."/>
            <person name="Noegel A.A."/>
            <person name="Barrell B.G."/>
            <person name="Kuspa A."/>
        </authorList>
    </citation>
    <scope>NUCLEOTIDE SEQUENCE [LARGE SCALE GENOMIC DNA]</scope>
    <source>
        <strain>AX4</strain>
    </source>
</reference>
<feature type="chain" id="PRO_0000328418" description="Periodic tryptophan protein 2 homolog">
    <location>
        <begin position="1"/>
        <end position="922"/>
    </location>
</feature>
<feature type="repeat" description="WD 1">
    <location>
        <begin position="12"/>
        <end position="52"/>
    </location>
</feature>
<feature type="repeat" description="WD 2">
    <location>
        <begin position="53"/>
        <end position="92"/>
    </location>
</feature>
<feature type="repeat" description="WD 3">
    <location>
        <begin position="94"/>
        <end position="132"/>
    </location>
</feature>
<feature type="repeat" description="WD 4">
    <location>
        <begin position="141"/>
        <end position="180"/>
    </location>
</feature>
<feature type="repeat" description="WD 5">
    <location>
        <begin position="182"/>
        <end position="221"/>
    </location>
</feature>
<feature type="repeat" description="WD 6">
    <location>
        <begin position="271"/>
        <end position="310"/>
    </location>
</feature>
<feature type="repeat" description="WD 7">
    <location>
        <begin position="313"/>
        <end position="353"/>
    </location>
</feature>
<feature type="repeat" description="WD 8">
    <location>
        <begin position="356"/>
        <end position="395"/>
    </location>
</feature>
<feature type="repeat" description="WD 9">
    <location>
        <begin position="398"/>
        <end position="439"/>
    </location>
</feature>
<feature type="repeat" description="WD 10">
    <location>
        <begin position="443"/>
        <end position="485"/>
    </location>
</feature>
<feature type="repeat" description="WD 11">
    <location>
        <begin position="486"/>
        <end position="525"/>
    </location>
</feature>
<feature type="repeat" description="WD 12">
    <location>
        <begin position="528"/>
        <end position="567"/>
    </location>
</feature>
<feature type="repeat" description="WD 13">
    <location>
        <begin position="590"/>
        <end position="629"/>
    </location>
</feature>
<feature type="repeat" description="WD 14">
    <location>
        <begin position="691"/>
        <end position="731"/>
    </location>
</feature>
<feature type="region of interest" description="Disordered" evidence="2">
    <location>
        <begin position="893"/>
        <end position="922"/>
    </location>
</feature>
<feature type="compositionally biased region" description="Acidic residues" evidence="2">
    <location>
        <begin position="900"/>
        <end position="911"/>
    </location>
</feature>
<sequence>MKFGYKFSNLLGTVYNKGNILFTPDGNTVISPVGNRLTVFDLVNHTSITLPIQSKYNIRRLALSPNGQILITSDESGHTLIINLTRQVVLGEYKFFKTPKSILFSPNGAIIAIAVLEKVFLFKTPIIQKQPNPLIRLSVFTHKSAVISMCWSADSLKLMIGCKNGTLLIRQGKSERVSYFQVKGSGIINCFFGNEESTIAYAVTPTGLASWDYKTNEEMEQEKLERVENGETAYLREEEMDEEKLKVITENQRLYKGRWIFKGFKKFENYGVKCKVKTVCFHLKSKLLLVGFSTGQFILYEMPGFNQLYKLNISSHGISTSAINNTGEWLAFGCSELGQLLVWEWRSETYILKQQGHSYNMNTVAYSPDGQTIATGGEDGKVKIWNTTSGYCYITFTEHEGPVTAVKYSPVSSQNVVFSAGVDGTIRAFDLVRYRNFRTFVSPNKTQFSCLAVDPSGEIIAAGSLDSFEIYVWSVRTGRLTDILSGHQSPVCELAFDPINPFLASASWDKSCKIWNIFEDREIRESIQHTSDVLTCAYSQDGKKFIVSCLDGTIQIYETSTWGQIGLIDGKNDIMGGRGYKDEILAKNNSAGRAFTKIAFTPNGECIIAGGNSKYICIYHIDQQVLIKKYSTSSNLSLDGITLDINWKRVGEFGHLDAMEKDFDSDDDLYQQNKEYLTGSSKGDLSKRTTKKKQKTTSISVSPTGRAWAVSTTEGLLIYSLDDFLFFDPTDLSIDINPDSILSELNLKNYLKSLIMSIKLNEKPIIEKVFESIPFNEIQLVCQEFPIYYLKNFIQFLSGYFEKNHHLEFQMKWVKLISIYHGKYIKTNSLSMITSLRNLQKTITQTYNDISKVCDDNIFSMEYFKTVLLKELKSQEETNKISKKSQKYKKYLESKKNKEQEEDQFSDDEETVYQNNKKNKNK</sequence>
<proteinExistence type="inferred from homology"/>
<organism>
    <name type="scientific">Dictyostelium discoideum</name>
    <name type="common">Social amoeba</name>
    <dbReference type="NCBI Taxonomy" id="44689"/>
    <lineage>
        <taxon>Eukaryota</taxon>
        <taxon>Amoebozoa</taxon>
        <taxon>Evosea</taxon>
        <taxon>Eumycetozoa</taxon>
        <taxon>Dictyostelia</taxon>
        <taxon>Dictyosteliales</taxon>
        <taxon>Dictyosteliaceae</taxon>
        <taxon>Dictyostelium</taxon>
    </lineage>
</organism>
<accession>Q54PE0</accession>
<name>PWP2_DICDI</name>
<protein>
    <recommendedName>
        <fullName>Periodic tryptophan protein 2 homolog</fullName>
    </recommendedName>
</protein>
<keyword id="KW-0539">Nucleus</keyword>
<keyword id="KW-1185">Reference proteome</keyword>
<keyword id="KW-0677">Repeat</keyword>
<keyword id="KW-0853">WD repeat</keyword>